<proteinExistence type="inferred from homology"/>
<feature type="chain" id="PRO_1000057322" description="D-alanine--D-alanine ligase">
    <location>
        <begin position="1"/>
        <end position="307"/>
    </location>
</feature>
<feature type="domain" description="ATP-grasp" evidence="2">
    <location>
        <begin position="104"/>
        <end position="301"/>
    </location>
</feature>
<feature type="binding site" evidence="2">
    <location>
        <begin position="130"/>
        <end position="183"/>
    </location>
    <ligand>
        <name>ATP</name>
        <dbReference type="ChEBI" id="CHEBI:30616"/>
    </ligand>
</feature>
<feature type="binding site" evidence="2">
    <location>
        <position position="251"/>
    </location>
    <ligand>
        <name>Mg(2+)</name>
        <dbReference type="ChEBI" id="CHEBI:18420"/>
        <label>1</label>
    </ligand>
</feature>
<feature type="binding site" evidence="2">
    <location>
        <position position="268"/>
    </location>
    <ligand>
        <name>Mg(2+)</name>
        <dbReference type="ChEBI" id="CHEBI:18420"/>
        <label>1</label>
    </ligand>
</feature>
<feature type="binding site" evidence="2">
    <location>
        <position position="268"/>
    </location>
    <ligand>
        <name>Mg(2+)</name>
        <dbReference type="ChEBI" id="CHEBI:18420"/>
        <label>2</label>
    </ligand>
</feature>
<feature type="binding site" evidence="2">
    <location>
        <position position="270"/>
    </location>
    <ligand>
        <name>Mg(2+)</name>
        <dbReference type="ChEBI" id="CHEBI:18420"/>
        <label>2</label>
    </ligand>
</feature>
<organism>
    <name type="scientific">Granulibacter bethesdensis (strain ATCC BAA-1260 / CGDNIH1)</name>
    <dbReference type="NCBI Taxonomy" id="391165"/>
    <lineage>
        <taxon>Bacteria</taxon>
        <taxon>Pseudomonadati</taxon>
        <taxon>Pseudomonadota</taxon>
        <taxon>Alphaproteobacteria</taxon>
        <taxon>Acetobacterales</taxon>
        <taxon>Acetobacteraceae</taxon>
        <taxon>Granulibacter</taxon>
    </lineage>
</organism>
<gene>
    <name evidence="2" type="primary">ddl</name>
    <name type="ordered locus">GbCGDNIH1_0426</name>
</gene>
<dbReference type="EC" id="6.3.2.4" evidence="2"/>
<dbReference type="EMBL" id="CP000394">
    <property type="protein sequence ID" value="ABI61324.1"/>
    <property type="molecule type" value="Genomic_DNA"/>
</dbReference>
<dbReference type="RefSeq" id="WP_011631134.1">
    <property type="nucleotide sequence ID" value="NC_008343.2"/>
</dbReference>
<dbReference type="SMR" id="Q0BV28"/>
<dbReference type="STRING" id="391165.GbCGDNIH1_0426"/>
<dbReference type="KEGG" id="gbe:GbCGDNIH1_0426"/>
<dbReference type="eggNOG" id="COG1181">
    <property type="taxonomic scope" value="Bacteria"/>
</dbReference>
<dbReference type="HOGENOM" id="CLU_039268_1_1_5"/>
<dbReference type="UniPathway" id="UPA00219"/>
<dbReference type="Proteomes" id="UP000001963">
    <property type="component" value="Chromosome"/>
</dbReference>
<dbReference type="GO" id="GO:0005737">
    <property type="term" value="C:cytoplasm"/>
    <property type="evidence" value="ECO:0007669"/>
    <property type="project" value="UniProtKB-SubCell"/>
</dbReference>
<dbReference type="GO" id="GO:0005524">
    <property type="term" value="F:ATP binding"/>
    <property type="evidence" value="ECO:0007669"/>
    <property type="project" value="UniProtKB-KW"/>
</dbReference>
<dbReference type="GO" id="GO:0008716">
    <property type="term" value="F:D-alanine-D-alanine ligase activity"/>
    <property type="evidence" value="ECO:0007669"/>
    <property type="project" value="UniProtKB-UniRule"/>
</dbReference>
<dbReference type="GO" id="GO:0046872">
    <property type="term" value="F:metal ion binding"/>
    <property type="evidence" value="ECO:0007669"/>
    <property type="project" value="UniProtKB-KW"/>
</dbReference>
<dbReference type="GO" id="GO:0071555">
    <property type="term" value="P:cell wall organization"/>
    <property type="evidence" value="ECO:0007669"/>
    <property type="project" value="UniProtKB-KW"/>
</dbReference>
<dbReference type="GO" id="GO:0009252">
    <property type="term" value="P:peptidoglycan biosynthetic process"/>
    <property type="evidence" value="ECO:0007669"/>
    <property type="project" value="UniProtKB-UniRule"/>
</dbReference>
<dbReference type="GO" id="GO:0008360">
    <property type="term" value="P:regulation of cell shape"/>
    <property type="evidence" value="ECO:0007669"/>
    <property type="project" value="UniProtKB-KW"/>
</dbReference>
<dbReference type="Gene3D" id="3.40.50.20">
    <property type="match status" value="1"/>
</dbReference>
<dbReference type="Gene3D" id="3.30.1490.20">
    <property type="entry name" value="ATP-grasp fold, A domain"/>
    <property type="match status" value="1"/>
</dbReference>
<dbReference type="Gene3D" id="3.30.470.20">
    <property type="entry name" value="ATP-grasp fold, B domain"/>
    <property type="match status" value="1"/>
</dbReference>
<dbReference type="HAMAP" id="MF_00047">
    <property type="entry name" value="Dala_Dala_lig"/>
    <property type="match status" value="1"/>
</dbReference>
<dbReference type="InterPro" id="IPR011761">
    <property type="entry name" value="ATP-grasp"/>
</dbReference>
<dbReference type="InterPro" id="IPR013815">
    <property type="entry name" value="ATP_grasp_subdomain_1"/>
</dbReference>
<dbReference type="InterPro" id="IPR000291">
    <property type="entry name" value="D-Ala_lig_Van_CS"/>
</dbReference>
<dbReference type="InterPro" id="IPR005905">
    <property type="entry name" value="D_ala_D_ala"/>
</dbReference>
<dbReference type="InterPro" id="IPR011095">
    <property type="entry name" value="Dala_Dala_lig_C"/>
</dbReference>
<dbReference type="InterPro" id="IPR011127">
    <property type="entry name" value="Dala_Dala_lig_N"/>
</dbReference>
<dbReference type="InterPro" id="IPR016185">
    <property type="entry name" value="PreATP-grasp_dom_sf"/>
</dbReference>
<dbReference type="NCBIfam" id="TIGR01205">
    <property type="entry name" value="D_ala_D_alaTIGR"/>
    <property type="match status" value="1"/>
</dbReference>
<dbReference type="NCBIfam" id="NF002378">
    <property type="entry name" value="PRK01372.1"/>
    <property type="match status" value="1"/>
</dbReference>
<dbReference type="PANTHER" id="PTHR23132">
    <property type="entry name" value="D-ALANINE--D-ALANINE LIGASE"/>
    <property type="match status" value="1"/>
</dbReference>
<dbReference type="PANTHER" id="PTHR23132:SF23">
    <property type="entry name" value="D-ALANINE--D-ALANINE LIGASE B"/>
    <property type="match status" value="1"/>
</dbReference>
<dbReference type="Pfam" id="PF07478">
    <property type="entry name" value="Dala_Dala_lig_C"/>
    <property type="match status" value="1"/>
</dbReference>
<dbReference type="Pfam" id="PF01820">
    <property type="entry name" value="Dala_Dala_lig_N"/>
    <property type="match status" value="2"/>
</dbReference>
<dbReference type="PIRSF" id="PIRSF039102">
    <property type="entry name" value="Ddl/VanB"/>
    <property type="match status" value="1"/>
</dbReference>
<dbReference type="SUPFAM" id="SSF56059">
    <property type="entry name" value="Glutathione synthetase ATP-binding domain-like"/>
    <property type="match status" value="1"/>
</dbReference>
<dbReference type="SUPFAM" id="SSF52440">
    <property type="entry name" value="PreATP-grasp domain"/>
    <property type="match status" value="1"/>
</dbReference>
<dbReference type="PROSITE" id="PS50975">
    <property type="entry name" value="ATP_GRASP"/>
    <property type="match status" value="1"/>
</dbReference>
<dbReference type="PROSITE" id="PS00843">
    <property type="entry name" value="DALA_DALA_LIGASE_1"/>
    <property type="match status" value="1"/>
</dbReference>
<dbReference type="PROSITE" id="PS00844">
    <property type="entry name" value="DALA_DALA_LIGASE_2"/>
    <property type="match status" value="1"/>
</dbReference>
<comment type="function">
    <text evidence="2">Cell wall formation.</text>
</comment>
<comment type="catalytic activity">
    <reaction evidence="2">
        <text>2 D-alanine + ATP = D-alanyl-D-alanine + ADP + phosphate + H(+)</text>
        <dbReference type="Rhea" id="RHEA:11224"/>
        <dbReference type="ChEBI" id="CHEBI:15378"/>
        <dbReference type="ChEBI" id="CHEBI:30616"/>
        <dbReference type="ChEBI" id="CHEBI:43474"/>
        <dbReference type="ChEBI" id="CHEBI:57416"/>
        <dbReference type="ChEBI" id="CHEBI:57822"/>
        <dbReference type="ChEBI" id="CHEBI:456216"/>
        <dbReference type="EC" id="6.3.2.4"/>
    </reaction>
</comment>
<comment type="cofactor">
    <cofactor evidence="1">
        <name>Mg(2+)</name>
        <dbReference type="ChEBI" id="CHEBI:18420"/>
    </cofactor>
    <cofactor evidence="1">
        <name>Mn(2+)</name>
        <dbReference type="ChEBI" id="CHEBI:29035"/>
    </cofactor>
    <text evidence="1">Binds 2 magnesium or manganese ions per subunit.</text>
</comment>
<comment type="pathway">
    <text evidence="2">Cell wall biogenesis; peptidoglycan biosynthesis.</text>
</comment>
<comment type="subcellular location">
    <subcellularLocation>
        <location evidence="2">Cytoplasm</location>
    </subcellularLocation>
</comment>
<comment type="similarity">
    <text evidence="2">Belongs to the D-alanine--D-alanine ligase family.</text>
</comment>
<sequence>MSIRRVVVLYGGISEERAVSLISGQQVVAALREAGYEVTPIEVGADLRDTIAALTPAPDVVFNALHGRFGEDGAIQGVLDWLNIPYTHSGVRASAIAMDKAAARTAFLAAGLPVAEGRLVTVEELAEQDPLPRPFVIKPANEGSAVGVHILHEGDNRRTEIARSWSFGGQALVEEYIPGRELTVGVLNDRALTVTDIRPRSAFYDYESKYAEGGSRHILPAQMHPDAFKRALDVALAAHHALGCRGATRSDFRYDDTRAEPGRLVLLEVNTQPGLTPTSLLPEQAALMGMDFVSLCRWMVEQATCRA</sequence>
<reference key="1">
    <citation type="journal article" date="2007" name="J. Bacteriol.">
        <title>Genome sequence analysis of the emerging human pathogenic acetic acid bacterium Granulibacter bethesdensis.</title>
        <authorList>
            <person name="Greenberg D.E."/>
            <person name="Porcella S.F."/>
            <person name="Zelazny A.M."/>
            <person name="Virtaneva K."/>
            <person name="Sturdevant D.E."/>
            <person name="Kupko J.J. III"/>
            <person name="Barbian K.D."/>
            <person name="Babar A."/>
            <person name="Dorward D.W."/>
            <person name="Holland S.M."/>
        </authorList>
    </citation>
    <scope>NUCLEOTIDE SEQUENCE [LARGE SCALE GENOMIC DNA]</scope>
    <source>
        <strain>ATCC BAA-1260 / CGDNIH1</strain>
    </source>
</reference>
<protein>
    <recommendedName>
        <fullName evidence="2">D-alanine--D-alanine ligase</fullName>
        <ecNumber evidence="2">6.3.2.4</ecNumber>
    </recommendedName>
    <alternativeName>
        <fullName evidence="2">D-Ala-D-Ala ligase</fullName>
    </alternativeName>
    <alternativeName>
        <fullName evidence="2">D-alanylalanine synthetase</fullName>
    </alternativeName>
</protein>
<name>DDL_GRABC</name>
<keyword id="KW-0067">ATP-binding</keyword>
<keyword id="KW-0133">Cell shape</keyword>
<keyword id="KW-0961">Cell wall biogenesis/degradation</keyword>
<keyword id="KW-0963">Cytoplasm</keyword>
<keyword id="KW-0436">Ligase</keyword>
<keyword id="KW-0460">Magnesium</keyword>
<keyword id="KW-0464">Manganese</keyword>
<keyword id="KW-0479">Metal-binding</keyword>
<keyword id="KW-0547">Nucleotide-binding</keyword>
<keyword id="KW-0573">Peptidoglycan synthesis</keyword>
<keyword id="KW-1185">Reference proteome</keyword>
<evidence type="ECO:0000250" key="1"/>
<evidence type="ECO:0000255" key="2">
    <source>
        <dbReference type="HAMAP-Rule" id="MF_00047"/>
    </source>
</evidence>
<accession>Q0BV28</accession>